<protein>
    <recommendedName>
        <fullName>Envelope glycoprotein</fullName>
    </recommendedName>
    <alternativeName>
        <fullName>GP1,2</fullName>
        <shortName>GP</shortName>
    </alternativeName>
    <component>
        <recommendedName>
            <fullName>GP1</fullName>
        </recommendedName>
    </component>
    <component>
        <recommendedName>
            <fullName>GP2</fullName>
        </recommendedName>
    </component>
    <component>
        <recommendedName>
            <fullName>Shed GP</fullName>
        </recommendedName>
        <alternativeName>
            <fullName>GP1,2-delta</fullName>
        </alternativeName>
    </component>
</protein>
<evidence type="ECO:0000250" key="1"/>
<evidence type="ECO:0000250" key="2">
    <source>
        <dbReference type="UniProtKB" id="O11457"/>
    </source>
</evidence>
<evidence type="ECO:0000250" key="3">
    <source>
        <dbReference type="UniProtKB" id="Q05320"/>
    </source>
</evidence>
<evidence type="ECO:0000250" key="4">
    <source>
        <dbReference type="UniProtKB" id="Q66814"/>
    </source>
</evidence>
<evidence type="ECO:0000255" key="5"/>
<evidence type="ECO:0000256" key="6">
    <source>
        <dbReference type="SAM" id="MobiDB-lite"/>
    </source>
</evidence>
<evidence type="ECO:0000305" key="7"/>
<evidence type="ECO:0007829" key="8">
    <source>
        <dbReference type="PDB" id="7RPU"/>
    </source>
</evidence>
<comment type="function">
    <molecule>Envelope glycoprotein</molecule>
    <text evidence="3">Trimeric GP1,2 complexes form the virion surface spikes and mediate the viral entry processes, with GP1 acting as the receptor-binding subunit and GP2 as the membrane fusion subunit. At later times of infection, down-regulates the expression of various host cell surface molecules that are essential for immune surveillance and cell adhesion. Down-modulates several integrins including ITGA1, ITGA2, ITGA3, ITGA4, ITGA5, ITGA6, ITGAV and ITGB1. This decrease in cell adhesion molecules may lead to cell detachment, contributing to the disruption of blood vessel integrity and hemorrhages developed during infection (cytotoxicity). Interacts with host TLR4 and thereby stimulates the differentiation and activation of monocytes leading to bystander death of T-lymphocytes. Down-regulates as well the function of host natural killer cells. Counteracts the antiviral effect of host BST2/tetherin that restricts release of progeny virions from infected cells. However, cooperates with VP40 and host BST2 to activate canonical NF-kappa-B pathway in a manner dependent on neddylation.</text>
</comment>
<comment type="function">
    <molecule>Shed GP</molecule>
    <text evidence="3">Functions as a decoy for anti-GP1,2 antibodies thereby contributing to viral immune evasion. Interacts and activates host macrophages and dendritic cells inducing up-regulation of cytokine transcription. This effect is mediated throught activation of host TLR4.</text>
</comment>
<comment type="function">
    <molecule>GP1</molecule>
    <text evidence="2 3 4">Responsible for binding to the receptor(s) on target cells. Interacts with CD209/DC-SIGN and CLEC4M/DC-SIGNR which act as cofactors for virus entry into dendritic cells (DCs) and endothelial cells (By similarity). Binding to the macrophage specific lectin CLEC10A also seems to enhance virus infectivity (By similarity). Interaction with FOLR1/folate receptor alpha may be a cofactor for virus entry in some cell types, although results are contradictory (By similarity). Members of the Tyro3 receptor tyrosine kinase family also seem to be cell entry factors in filovirus infection (By similarity). Once attached, the virions are internalized through clathrin-dependent endocytosis and/or macropinocytosis. After internalization of the virus into the endosomes of the host cell, proteolysis of GP1 by two cysteine proteases, CTSB/cathepsin B and CTSL/cathepsin L removes the glycan cap and allows GP1 binding to the host entry receptor NPC1. NPC1-binding, Ca(2+) and acidic pH induce a conformational change of GP2, which unmasks its fusion peptide and permit membranes fusion (By similarity).</text>
</comment>
<comment type="function">
    <molecule>GP2</molecule>
    <text evidence="3">Acts as a class I viral fusion protein. Under the current model, the protein has at least 3 conformational states: pre-fusion native state, pre-hairpin intermediate state, and post-fusion hairpin state. During viral and target cell membrane fusion, the coiled coil regions (heptad repeats) assume a trimer-of-hairpins structure, positioning the fusion peptide in close proximity to the C-terminal region of the ectodomain. The formation of this structure appears to drive apposition and subsequent fusion of viral and target cell membranes. Responsible for penetration of the virus into the cell cytoplasm by mediating the fusion of the membrane of the endocytosed virus particle with the endosomal membrane. Low pH in endosomes induces an irreversible conformational change in GP2, releasing the fusion hydrophobic peptide.</text>
</comment>
<comment type="subunit">
    <molecule>Envelope glycoprotein</molecule>
    <text evidence="3">Homotrimer; each monomer consists of a GP1 and a GP2 subunit linked by disulfide bonds. The resulting peplomers (GP1,2) protrude from the virus surface as spikes. Interacts with host integrin alpha-V/ITGAV. Interacts with host CLEC10A. Binds also to host CD209 and CLEC4M/DC-SIGN(R). Interacts with host FOLR1. Interacts with BST2; this interaction inhibits the antiviral effect of BST2 and this allows viral release from infected cells. Interacts with host FCN1; this interaction enhances viral entry. Interacts with host TLR4; this interaction induces cell death in T-lymphocytes or proinflammatory cytokines and SOCS1 production in monocytes.</text>
</comment>
<comment type="subunit">
    <molecule>GP1</molecule>
    <text evidence="3">Interacts with host entry receptor NPC1.</text>
</comment>
<comment type="subunit">
    <molecule>Shed GP</molecule>
    <text evidence="3">GP1 and GP2delta are part of GP1,2delta soluble complexes released by ectodomain shedding.</text>
</comment>
<comment type="subcellular location">
    <molecule>GP2</molecule>
    <subcellularLocation>
        <location evidence="3">Virion membrane</location>
        <topology evidence="5">Single-pass type I membrane protein</topology>
    </subcellularLocation>
    <subcellularLocation>
        <location evidence="3">Host cell membrane</location>
        <topology evidence="5">Single-pass type I membrane protein</topology>
    </subcellularLocation>
    <text evidence="3">In the cell, localizes to the plasma membrane lipid rafts, which probably represent the assembly and budding site.</text>
</comment>
<comment type="subcellular location">
    <molecule>GP1</molecule>
    <subcellularLocation>
        <location evidence="3">Virion membrane</location>
        <topology evidence="3">Peripheral membrane protein</topology>
    </subcellularLocation>
    <subcellularLocation>
        <location evidence="3">Host cell membrane</location>
        <topology evidence="3">Peripheral membrane protein</topology>
    </subcellularLocation>
    <text evidence="3">GP1 is not anchored to the viral envelope, but forms a disulfid-linked complex with the extravirion surface GP2. In the cell, both GP1 and GP2 localize to the plasma membrane lipid rafts, which probably represent the assembly and budding site. GP1 can also be shed after proteolytic processing.</text>
</comment>
<comment type="subcellular location">
    <molecule>Shed GP</molecule>
    <subcellularLocation>
        <location evidence="3">Secreted</location>
    </subcellularLocation>
    <text evidence="3">GP2-delta bound to GP1 (GP1,2-delta) is produced by proteolytic cleavage of GP1,2 by host ADAM17 and shed by the virus.</text>
</comment>
<comment type="domain">
    <text evidence="1">The mucin-like region seems to be involved in the cytotoxic function. This region is also involved in binding to human CLEC10A (By similarity).</text>
</comment>
<comment type="domain">
    <text evidence="1">The coiled coil regions play a role in oligomerization and fusion activity.</text>
</comment>
<comment type="PTM">
    <text evidence="1">The signal peptide region modulates GP's high mannose glycosylation, thereby determining the efficiency of the interactions with DC-SIGN(R).</text>
</comment>
<comment type="PTM">
    <text evidence="1">N-glycosylated.</text>
</comment>
<comment type="PTM">
    <text evidence="1">O-glycosylated in the mucin-like region.</text>
</comment>
<comment type="PTM">
    <text evidence="1">Palmitoylation of GP2 is not required for its function.</text>
</comment>
<comment type="PTM">
    <text evidence="1">Specific enzymatic cleavages in vivo yield mature proteins. The precursor is processed into GP1 and GP2 by host cell furin in the trans Golgi, and maybe by other host proteases, to yield the mature GP1 and GP2 proteins. The cleavage site corresponds to the furin optimal cleavage sequence [KR]-X-[KR]-R. This cleavage does not seem to be required for function. After the internalization of the virus into cell endosomes, GP1 C-terminus is removed by the endosomal proteases cathepsin B, cathepsin L, or both, leaving a 19-kDa N-terminal fragment which is further digested by cathepsin B. Proteolytic processing of GP1,2 by host ADAM17 can remove the transmembrane anchor of GP2 and leads to shedding of complexes consisting in GP1 and truncated GP2 (GP1,2delta) (By similarity).</text>
</comment>
<comment type="RNA editing">
    <location>
        <position position="295" evidence="1"/>
    </location>
    <text evidence="1">Partially edited. RNA editing at this position consists of an insertion of one adenine nucleotide. The sequence displayed here is the full-length transmembrane glycoprotein, derived from the edited RNA. The unedited RNA gives rise to the small secreted glycoprotein (AC P87670) (By similarity).</text>
</comment>
<comment type="miscellaneous">
    <text evidence="1">Filoviruses entry requires functional lipid rafts at the host cell surface.</text>
</comment>
<comment type="miscellaneous">
    <text>Essential for infectivity, as it is the sole viral protein expressed at the virion surface.</text>
</comment>
<comment type="similarity">
    <text evidence="7">Belongs to the filoviruses glycoprotein family.</text>
</comment>
<feature type="signal peptide" evidence="5">
    <location>
        <begin position="1"/>
        <end position="32"/>
    </location>
</feature>
<feature type="chain" id="PRO_0000037461" description="Envelope glycoprotein">
    <location>
        <begin position="33"/>
        <end position="676"/>
    </location>
</feature>
<feature type="chain" id="PRO_0000037462" description="GP1" evidence="1">
    <location>
        <begin position="33"/>
        <end position="501"/>
    </location>
</feature>
<feature type="chain" id="PRO_0000037463" description="GP2" evidence="1">
    <location>
        <begin position="502"/>
        <end position="676"/>
    </location>
</feature>
<feature type="chain" id="PRO_0000245054" description="Shed GP" evidence="1">
    <location>
        <begin position="502"/>
        <end position="637"/>
    </location>
</feature>
<feature type="topological domain" description="Extracellular" evidence="5">
    <location>
        <begin position="33"/>
        <end position="650"/>
    </location>
</feature>
<feature type="transmembrane region" description="Helical" evidence="5">
    <location>
        <begin position="651"/>
        <end position="671"/>
    </location>
</feature>
<feature type="topological domain" description="Cytoplasmic" evidence="5">
    <location>
        <begin position="672"/>
        <end position="676"/>
    </location>
</feature>
<feature type="region of interest" description="Receptor-binding" evidence="1">
    <location>
        <begin position="54"/>
        <end position="201"/>
    </location>
</feature>
<feature type="region of interest" description="Mucin-like region" evidence="1">
    <location>
        <begin position="305"/>
        <end position="485"/>
    </location>
</feature>
<feature type="region of interest" description="Disordered" evidence="6">
    <location>
        <begin position="315"/>
        <end position="337"/>
    </location>
</feature>
<feature type="region of interest" description="Disordered" evidence="6">
    <location>
        <begin position="373"/>
        <end position="392"/>
    </location>
</feature>
<feature type="region of interest" description="Disordered" evidence="6">
    <location>
        <begin position="402"/>
        <end position="479"/>
    </location>
</feature>
<feature type="region of interest" description="Fusion peptide" evidence="1">
    <location>
        <begin position="524"/>
        <end position="539"/>
    </location>
</feature>
<feature type="coiled-coil region" evidence="5">
    <location>
        <begin position="554"/>
        <end position="595"/>
    </location>
</feature>
<feature type="coiled-coil region" evidence="5">
    <location>
        <begin position="615"/>
        <end position="634"/>
    </location>
</feature>
<feature type="compositionally biased region" description="Polar residues" evidence="6">
    <location>
        <begin position="315"/>
        <end position="335"/>
    </location>
</feature>
<feature type="compositionally biased region" description="Polar residues" evidence="6">
    <location>
        <begin position="373"/>
        <end position="391"/>
    </location>
</feature>
<feature type="compositionally biased region" description="Low complexity" evidence="6">
    <location>
        <begin position="414"/>
        <end position="432"/>
    </location>
</feature>
<feature type="compositionally biased region" description="Polar residues" evidence="6">
    <location>
        <begin position="433"/>
        <end position="464"/>
    </location>
</feature>
<feature type="site" description="Involved in receptor recognition and/or post-binding events" evidence="5">
    <location>
        <position position="57"/>
    </location>
</feature>
<feature type="site" description="Involved in receptor recognition and/or post-binding events" evidence="5">
    <location>
        <position position="63"/>
    </location>
</feature>
<feature type="site" description="Involved in receptor recognition and/or post-binding events" evidence="5">
    <location>
        <position position="64"/>
    </location>
</feature>
<feature type="site" description="Involved in receptor recognition and/or post-binding events" evidence="5">
    <location>
        <position position="88"/>
    </location>
</feature>
<feature type="site" description="Involved in receptor recognition and/or post-binding events" evidence="5">
    <location>
        <position position="95"/>
    </location>
</feature>
<feature type="site" description="Involved in receptor recognition and/or post-binding events" evidence="5">
    <location>
        <position position="170"/>
    </location>
</feature>
<feature type="site" description="Cleavage; by host furin" evidence="1">
    <location>
        <begin position="501"/>
        <end position="502"/>
    </location>
</feature>
<feature type="site" description="Cleavage; by host ADAM17" evidence="1">
    <location>
        <begin position="637"/>
        <end position="638"/>
    </location>
</feature>
<feature type="lipid moiety-binding region" description="S-palmitoyl cysteine; by host" evidence="3">
    <location>
        <position position="670"/>
    </location>
</feature>
<feature type="lipid moiety-binding region" description="S-palmitoyl cysteine; by host" evidence="3">
    <location>
        <position position="672"/>
    </location>
</feature>
<feature type="glycosylation site" description="N-linked (GlcNAc...) asparagine; by host" evidence="5">
    <location>
        <position position="40"/>
    </location>
</feature>
<feature type="glycosylation site" description="N-linked (GlcNAc...) asparagine; by host" evidence="5">
    <location>
        <position position="204"/>
    </location>
</feature>
<feature type="glycosylation site" description="N-linked (GlcNAc...) asparagine; by host" evidence="5">
    <location>
        <position position="228"/>
    </location>
</feature>
<feature type="glycosylation site" description="N-linked (GlcNAc...) asparagine; by host" evidence="5">
    <location>
        <position position="238"/>
    </location>
</feature>
<feature type="glycosylation site" description="N-linked (GlcNAc...) asparagine; by host" evidence="5">
    <location>
        <position position="257"/>
    </location>
</feature>
<feature type="glycosylation site" description="N-linked (GlcNAc...) asparagine; by host" evidence="5">
    <location>
        <position position="268"/>
    </location>
</feature>
<feature type="glycosylation site" description="N-linked (GlcNAc...) asparagine; by host" evidence="5">
    <location>
        <position position="296"/>
    </location>
</feature>
<feature type="glycosylation site" description="N-linked (GlcNAc...) asparagine; by host" evidence="5">
    <location>
        <position position="317"/>
    </location>
</feature>
<feature type="glycosylation site" description="N-linked (GlcNAc...) asparagine; by host" evidence="5">
    <location>
        <position position="333"/>
    </location>
</feature>
<feature type="glycosylation site" description="N-linked (GlcNAc...) asparagine; by host" evidence="5">
    <location>
        <position position="346"/>
    </location>
</feature>
<feature type="glycosylation site" description="N-linked (GlcNAc...) asparagine; by host" evidence="5">
    <location>
        <position position="386"/>
    </location>
</feature>
<feature type="glycosylation site" description="N-linked (GlcNAc...) asparagine; by host" evidence="5">
    <location>
        <position position="413"/>
    </location>
</feature>
<feature type="glycosylation site" description="N-linked (GlcNAc...) asparagine; by host" evidence="5">
    <location>
        <position position="436"/>
    </location>
</feature>
<feature type="glycosylation site" description="N-linked (GlcNAc...) asparagine; by host" evidence="5">
    <location>
        <position position="454"/>
    </location>
</feature>
<feature type="glycosylation site" description="N-linked (GlcNAc...) asparagine; by host" evidence="5">
    <location>
        <position position="462"/>
    </location>
</feature>
<feature type="glycosylation site" description="N-linked (GlcNAc...) asparagine; by host" evidence="5">
    <location>
        <position position="563"/>
    </location>
</feature>
<feature type="glycosylation site" description="N-linked (GlcNAc...) asparagine; by host" evidence="5">
    <location>
        <position position="618"/>
    </location>
</feature>
<feature type="disulfide bond" description="Interchain (between GP1 and GP2 chains)" evidence="1">
    <location>
        <begin position="53"/>
        <end position="609"/>
    </location>
</feature>
<feature type="disulfide bond" evidence="5">
    <location>
        <begin position="108"/>
        <end position="135"/>
    </location>
</feature>
<feature type="disulfide bond" evidence="5">
    <location>
        <begin position="121"/>
        <end position="147"/>
    </location>
</feature>
<feature type="disulfide bond" evidence="5">
    <location>
        <begin position="511"/>
        <end position="556"/>
    </location>
</feature>
<feature type="disulfide bond" evidence="2">
    <location>
        <begin position="601"/>
        <end position="608"/>
    </location>
</feature>
<feature type="helix" evidence="8">
    <location>
        <begin position="628"/>
        <end position="632"/>
    </location>
</feature>
<name>VGP_EBOEC</name>
<accession>P87671</accession>
<dbReference type="EMBL" id="U81161">
    <property type="protein sequence ID" value="AAC57992.1"/>
    <property type="molecule type" value="Genomic_RNA"/>
</dbReference>
<dbReference type="PDB" id="2QHR">
    <property type="method" value="X-ray"/>
    <property type="resolution" value="2.00 A"/>
    <property type="chains" value="P=404-414"/>
</dbReference>
<dbReference type="PDB" id="7RPU">
    <property type="method" value="X-ray"/>
    <property type="resolution" value="1.27 A"/>
    <property type="chains" value="P=626-640"/>
</dbReference>
<dbReference type="PDBsum" id="2QHR"/>
<dbReference type="PDBsum" id="7RPU"/>
<dbReference type="BMRB" id="P87671"/>
<dbReference type="SMR" id="P87671"/>
<dbReference type="GlyCosmos" id="P87671">
    <property type="glycosylation" value="17 sites, No reported glycans"/>
</dbReference>
<dbReference type="EvolutionaryTrace" id="P87671"/>
<dbReference type="GO" id="GO:0005576">
    <property type="term" value="C:extracellular region"/>
    <property type="evidence" value="ECO:0007669"/>
    <property type="project" value="UniProtKB-SubCell"/>
</dbReference>
<dbReference type="GO" id="GO:0020002">
    <property type="term" value="C:host cell plasma membrane"/>
    <property type="evidence" value="ECO:0007669"/>
    <property type="project" value="UniProtKB-SubCell"/>
</dbReference>
<dbReference type="GO" id="GO:0016020">
    <property type="term" value="C:membrane"/>
    <property type="evidence" value="ECO:0007669"/>
    <property type="project" value="UniProtKB-KW"/>
</dbReference>
<dbReference type="GO" id="GO:0019031">
    <property type="term" value="C:viral envelope"/>
    <property type="evidence" value="ECO:0007669"/>
    <property type="project" value="UniProtKB-KW"/>
</dbReference>
<dbReference type="GO" id="GO:0055036">
    <property type="term" value="C:virion membrane"/>
    <property type="evidence" value="ECO:0007669"/>
    <property type="project" value="UniProtKB-SubCell"/>
</dbReference>
<dbReference type="GO" id="GO:0075512">
    <property type="term" value="P:clathrin-dependent endocytosis of virus by host cell"/>
    <property type="evidence" value="ECO:0007669"/>
    <property type="project" value="UniProtKB-KW"/>
</dbReference>
<dbReference type="GO" id="GO:0098670">
    <property type="term" value="P:entry receptor-mediated virion attachment to host cell"/>
    <property type="evidence" value="ECO:0007669"/>
    <property type="project" value="UniProtKB-KW"/>
</dbReference>
<dbReference type="GO" id="GO:0039654">
    <property type="term" value="P:fusion of virus membrane with host endosome membrane"/>
    <property type="evidence" value="ECO:0007669"/>
    <property type="project" value="UniProtKB-KW"/>
</dbReference>
<dbReference type="GO" id="GO:0052170">
    <property type="term" value="P:symbiont-mediated suppression of host innate immune response"/>
    <property type="evidence" value="ECO:0007669"/>
    <property type="project" value="UniProtKB-KW"/>
</dbReference>
<dbReference type="GO" id="GO:0039587">
    <property type="term" value="P:symbiont-mediated-mediated suppression of host tetherin activity"/>
    <property type="evidence" value="ECO:0007669"/>
    <property type="project" value="UniProtKB-KW"/>
</dbReference>
<dbReference type="CDD" id="cd09850">
    <property type="entry name" value="Ebola-like_HR1-HR2"/>
    <property type="match status" value="1"/>
</dbReference>
<dbReference type="FunFam" id="1.10.287.210:FF:000003">
    <property type="entry name" value="Envelope glycoprotein"/>
    <property type="match status" value="1"/>
</dbReference>
<dbReference type="Gene3D" id="1.10.287.210">
    <property type="match status" value="1"/>
</dbReference>
<dbReference type="InterPro" id="IPR054584">
    <property type="entry name" value="Ebola-like_HR1-HR2"/>
</dbReference>
<dbReference type="InterPro" id="IPR014625">
    <property type="entry name" value="GPC_FiloV"/>
</dbReference>
<dbReference type="InterPro" id="IPR002561">
    <property type="entry name" value="GPC_filovir-type_extra_dom"/>
</dbReference>
<dbReference type="Pfam" id="PF22307">
    <property type="entry name" value="Ebola-like_HR1-HR2"/>
    <property type="match status" value="1"/>
</dbReference>
<dbReference type="Pfam" id="PF01611">
    <property type="entry name" value="Filo_glycop"/>
    <property type="match status" value="1"/>
</dbReference>
<dbReference type="PIRSF" id="PIRSF036874">
    <property type="entry name" value="GPC_FiloV"/>
    <property type="match status" value="1"/>
</dbReference>
<dbReference type="SUPFAM" id="SSF58069">
    <property type="entry name" value="Virus ectodomain"/>
    <property type="match status" value="1"/>
</dbReference>
<proteinExistence type="evidence at protein level"/>
<reference key="1">
    <citation type="journal article" date="1997" name="Virology">
        <title>Emergence of subtype Zaire Ebola virus in Gabon.</title>
        <authorList>
            <person name="Volchkov V."/>
            <person name="Volchkova V."/>
            <person name="Eckel C."/>
            <person name="Klenk H.-D."/>
            <person name="Bouloy M."/>
            <person name="Leguenno B."/>
            <person name="Feldmann H."/>
        </authorList>
    </citation>
    <scope>NUCLEOTIDE SEQUENCE [GENOMIC RNA]</scope>
</reference>
<organismHost>
    <name type="scientific">Epomops franqueti</name>
    <name type="common">Franquet's epauletted fruit bat</name>
    <name type="synonym">Epomophorus franqueti</name>
    <dbReference type="NCBI Taxonomy" id="77231"/>
</organismHost>
<organismHost>
    <name type="scientific">Homo sapiens</name>
    <name type="common">Human</name>
    <dbReference type="NCBI Taxonomy" id="9606"/>
</organismHost>
<organismHost>
    <name type="scientific">Myonycteris torquata</name>
    <name type="common">Little collared fruit bat</name>
    <dbReference type="NCBI Taxonomy" id="77243"/>
</organismHost>
<sequence>MGVTGILQLPRDRFKRTSFFLWVIILFQRTFSIPLGVIHNSTLQVNDVDKLVCRDKLSSTNQLRSVGLNLEGNGVATDVPSATKRWGFRSGVPPKVVNYEAGEWAENCYNLEIKKPDGSECLPAAPDGIRGFPRCRYVHKVSGTGPCAGDFAFHKEGAFFLYDRLASTVIYRGTTFAEGVVAFLILPQAKKDFFSSHPLREPVNATEDPSSGYYSTTIRYQATGFGTNETEYLFEVDNLTYVQLESRFTPQFLLQLNETIYTSGKRSNTTGKLIWKVNPEIDTTIGEWAFWETKKNLTRKIRSEELSFTVVSNGAKNISGQSPARTSSDPGTNTTTEDHKIMASENSSAMVQVHSQGREAAVSHLTTLATISTSPQSLTTKPGPDNSTHNTPVYKLDISEATQVEQHHRRTDNDSTASDTPSATTAAGPPKAENTNTSKSTDFLDPATTTSPQNHSETAGNNNTHHQDTGEESASSGKLGLITNTIAGVAGLITGGRRTRREAIVNAQPKCNPNLHYWTTQDEGAAIGLAWIPYFGPAAEGIYTEGLMHNQNGLICGLRQLANETTQALQLFLRATTELRTFSILNRKAIDFLLQRWGGTCHILGPDCCIEPHDWTKNITDKIDQIIHDFVDKTLPDQGDNDNWWTGWRQWIPAGIGVTGVIIAVIALFCICKFVF</sequence>
<organism>
    <name type="scientific">Zaire ebolavirus (strain Eckron-76)</name>
    <name type="common">ZEBOV</name>
    <name type="synonym">Zaire Ebola virus</name>
    <dbReference type="NCBI Taxonomy" id="129000"/>
    <lineage>
        <taxon>Viruses</taxon>
        <taxon>Riboviria</taxon>
        <taxon>Orthornavirae</taxon>
        <taxon>Negarnaviricota</taxon>
        <taxon>Haploviricotina</taxon>
        <taxon>Monjiviricetes</taxon>
        <taxon>Mononegavirales</taxon>
        <taxon>Filoviridae</taxon>
        <taxon>Orthoebolavirus</taxon>
        <taxon>Orthoebolavirus zairense</taxon>
        <taxon>Zaire ebolavirus</taxon>
    </lineage>
</organism>
<keyword id="KW-0002">3D-structure</keyword>
<keyword id="KW-1165">Clathrin-mediated endocytosis of virus by host</keyword>
<keyword id="KW-0165">Cleavage on pair of basic residues</keyword>
<keyword id="KW-0175">Coiled coil</keyword>
<keyword id="KW-1015">Disulfide bond</keyword>
<keyword id="KW-1170">Fusion of virus membrane with host endosomal membrane</keyword>
<keyword id="KW-1168">Fusion of virus membrane with host membrane</keyword>
<keyword id="KW-0325">Glycoprotein</keyword>
<keyword id="KW-1032">Host cell membrane</keyword>
<keyword id="KW-1043">Host membrane</keyword>
<keyword id="KW-0945">Host-virus interaction</keyword>
<keyword id="KW-1090">Inhibition of host innate immune response by virus</keyword>
<keyword id="KW-1084">Inhibition of host tetherin by virus</keyword>
<keyword id="KW-0449">Lipoprotein</keyword>
<keyword id="KW-0472">Membrane</keyword>
<keyword id="KW-0564">Palmitate</keyword>
<keyword id="KW-0691">RNA editing</keyword>
<keyword id="KW-0964">Secreted</keyword>
<keyword id="KW-0732">Signal</keyword>
<keyword id="KW-0812">Transmembrane</keyword>
<keyword id="KW-1133">Transmembrane helix</keyword>
<keyword id="KW-1161">Viral attachment to host cell</keyword>
<keyword id="KW-1234">Viral attachment to host entry receptor</keyword>
<keyword id="KW-0261">Viral envelope protein</keyword>
<keyword id="KW-0899">Viral immunoevasion</keyword>
<keyword id="KW-1162">Viral penetration into host cytoplasm</keyword>
<keyword id="KW-0946">Virion</keyword>
<keyword id="KW-1164">Virus endocytosis by host</keyword>
<keyword id="KW-1160">Virus entry into host cell</keyword>
<gene>
    <name type="primary">GP</name>
</gene>